<feature type="chain" id="PRO_1000196571" description="Ribosome maturation factor RimM">
    <location>
        <begin position="1"/>
        <end position="172"/>
    </location>
</feature>
<feature type="domain" description="PRC barrel" evidence="1">
    <location>
        <begin position="95"/>
        <end position="168"/>
    </location>
</feature>
<dbReference type="EMBL" id="FM204883">
    <property type="protein sequence ID" value="CAW94083.1"/>
    <property type="molecule type" value="Genomic_DNA"/>
</dbReference>
<dbReference type="RefSeq" id="WP_012679659.1">
    <property type="nucleotide sequence ID" value="NC_012471.1"/>
</dbReference>
<dbReference type="SMR" id="C0M749"/>
<dbReference type="KEGG" id="seu:SEQ_1306"/>
<dbReference type="HOGENOM" id="CLU_077636_3_1_9"/>
<dbReference type="OrthoDB" id="9810331at2"/>
<dbReference type="Proteomes" id="UP000001365">
    <property type="component" value="Chromosome"/>
</dbReference>
<dbReference type="GO" id="GO:0005737">
    <property type="term" value="C:cytoplasm"/>
    <property type="evidence" value="ECO:0007669"/>
    <property type="project" value="UniProtKB-SubCell"/>
</dbReference>
<dbReference type="GO" id="GO:0005840">
    <property type="term" value="C:ribosome"/>
    <property type="evidence" value="ECO:0007669"/>
    <property type="project" value="InterPro"/>
</dbReference>
<dbReference type="GO" id="GO:0043022">
    <property type="term" value="F:ribosome binding"/>
    <property type="evidence" value="ECO:0007669"/>
    <property type="project" value="InterPro"/>
</dbReference>
<dbReference type="GO" id="GO:0042274">
    <property type="term" value="P:ribosomal small subunit biogenesis"/>
    <property type="evidence" value="ECO:0007669"/>
    <property type="project" value="UniProtKB-UniRule"/>
</dbReference>
<dbReference type="GO" id="GO:0006364">
    <property type="term" value="P:rRNA processing"/>
    <property type="evidence" value="ECO:0007669"/>
    <property type="project" value="UniProtKB-UniRule"/>
</dbReference>
<dbReference type="Gene3D" id="2.30.30.240">
    <property type="entry name" value="PRC-barrel domain"/>
    <property type="match status" value="1"/>
</dbReference>
<dbReference type="Gene3D" id="2.40.30.60">
    <property type="entry name" value="RimM"/>
    <property type="match status" value="1"/>
</dbReference>
<dbReference type="HAMAP" id="MF_00014">
    <property type="entry name" value="Ribosome_mat_RimM"/>
    <property type="match status" value="1"/>
</dbReference>
<dbReference type="InterPro" id="IPR027275">
    <property type="entry name" value="PRC-brl_dom"/>
</dbReference>
<dbReference type="InterPro" id="IPR011033">
    <property type="entry name" value="PRC_barrel-like_sf"/>
</dbReference>
<dbReference type="InterPro" id="IPR011961">
    <property type="entry name" value="RimM"/>
</dbReference>
<dbReference type="InterPro" id="IPR002676">
    <property type="entry name" value="RimM_N"/>
</dbReference>
<dbReference type="InterPro" id="IPR036976">
    <property type="entry name" value="RimM_N_sf"/>
</dbReference>
<dbReference type="InterPro" id="IPR009000">
    <property type="entry name" value="Transl_B-barrel_sf"/>
</dbReference>
<dbReference type="NCBIfam" id="TIGR02273">
    <property type="entry name" value="16S_RimM"/>
    <property type="match status" value="1"/>
</dbReference>
<dbReference type="PANTHER" id="PTHR33692">
    <property type="entry name" value="RIBOSOME MATURATION FACTOR RIMM"/>
    <property type="match status" value="1"/>
</dbReference>
<dbReference type="PANTHER" id="PTHR33692:SF1">
    <property type="entry name" value="RIBOSOME MATURATION FACTOR RIMM"/>
    <property type="match status" value="1"/>
</dbReference>
<dbReference type="Pfam" id="PF05239">
    <property type="entry name" value="PRC"/>
    <property type="match status" value="1"/>
</dbReference>
<dbReference type="Pfam" id="PF01782">
    <property type="entry name" value="RimM"/>
    <property type="match status" value="1"/>
</dbReference>
<dbReference type="SUPFAM" id="SSF50346">
    <property type="entry name" value="PRC-barrel domain"/>
    <property type="match status" value="1"/>
</dbReference>
<dbReference type="SUPFAM" id="SSF50447">
    <property type="entry name" value="Translation proteins"/>
    <property type="match status" value="1"/>
</dbReference>
<organism>
    <name type="scientific">Streptococcus equi subsp. equi (strain 4047)</name>
    <dbReference type="NCBI Taxonomy" id="553482"/>
    <lineage>
        <taxon>Bacteria</taxon>
        <taxon>Bacillati</taxon>
        <taxon>Bacillota</taxon>
        <taxon>Bacilli</taxon>
        <taxon>Lactobacillales</taxon>
        <taxon>Streptococcaceae</taxon>
        <taxon>Streptococcus</taxon>
    </lineage>
</organism>
<evidence type="ECO:0000255" key="1">
    <source>
        <dbReference type="HAMAP-Rule" id="MF_00014"/>
    </source>
</evidence>
<gene>
    <name evidence="1" type="primary">rimM</name>
    <name type="ordered locus">SEQ_1306</name>
</gene>
<keyword id="KW-0143">Chaperone</keyword>
<keyword id="KW-0963">Cytoplasm</keyword>
<keyword id="KW-0690">Ribosome biogenesis</keyword>
<keyword id="KW-0698">rRNA processing</keyword>
<accession>C0M749</accession>
<comment type="function">
    <text evidence="1">An accessory protein needed during the final step in the assembly of 30S ribosomal subunit, possibly for assembly of the head region. Essential for efficient processing of 16S rRNA. May be needed both before and after RbfA during the maturation of 16S rRNA. It has affinity for free ribosomal 30S subunits but not for 70S ribosomes.</text>
</comment>
<comment type="subunit">
    <text evidence="1">Binds ribosomal protein uS19.</text>
</comment>
<comment type="subcellular location">
    <subcellularLocation>
        <location evidence="1">Cytoplasm</location>
    </subcellularLocation>
</comment>
<comment type="domain">
    <text evidence="1">The PRC barrel domain binds ribosomal protein uS19.</text>
</comment>
<comment type="similarity">
    <text evidence="1">Belongs to the RimM family.</text>
</comment>
<name>RIMM_STRE4</name>
<sequence length="172" mass="20011">MEYFSVGKIVNTQGLQGEMRVLSVSDFTEERFQKGARLALFDDKDRFVQEVEIASHRKHKQFDIIKFKGMYHINAIEQFKGYSLKIAKENQGKLAEGEFYYHQIIGLEVYEKDQLVGEIKEILQPGANDVWVVKRQSKRDLLLPYIPSVVLCVDIEKHRVDVEIMEGLDDED</sequence>
<reference key="1">
    <citation type="journal article" date="2009" name="PLoS Pathog.">
        <title>Genomic evidence for the evolution of Streptococcus equi: host restriction, increased virulence, and genetic exchange with human pathogens.</title>
        <authorList>
            <person name="Holden M.T.G."/>
            <person name="Heather Z."/>
            <person name="Paillot R."/>
            <person name="Steward K.F."/>
            <person name="Webb K."/>
            <person name="Ainslie F."/>
            <person name="Jourdan T."/>
            <person name="Bason N.C."/>
            <person name="Holroyd N.E."/>
            <person name="Mungall K."/>
            <person name="Quail M.A."/>
            <person name="Sanders M."/>
            <person name="Simmonds M."/>
            <person name="Willey D."/>
            <person name="Brooks K."/>
            <person name="Aanensen D.M."/>
            <person name="Spratt B.G."/>
            <person name="Jolley K.A."/>
            <person name="Maiden M.C.J."/>
            <person name="Kehoe M."/>
            <person name="Chanter N."/>
            <person name="Bentley S.D."/>
            <person name="Robinson C."/>
            <person name="Maskell D.J."/>
            <person name="Parkhill J."/>
            <person name="Waller A.S."/>
        </authorList>
    </citation>
    <scope>NUCLEOTIDE SEQUENCE [LARGE SCALE GENOMIC DNA]</scope>
    <source>
        <strain>4047</strain>
    </source>
</reference>
<protein>
    <recommendedName>
        <fullName evidence="1">Ribosome maturation factor RimM</fullName>
    </recommendedName>
</protein>
<proteinExistence type="inferred from homology"/>